<reference key="1">
    <citation type="submission" date="2001-07" db="EMBL/GenBank/DDBJ databases">
        <title>Genome-wide discovery and analysis of human seven transmembrane helix receptor genes.</title>
        <authorList>
            <person name="Suwa M."/>
            <person name="Sato T."/>
            <person name="Okouchi I."/>
            <person name="Arita M."/>
            <person name="Futami K."/>
            <person name="Matsumoto S."/>
            <person name="Tsutsumi S."/>
            <person name="Aburatani H."/>
            <person name="Asai K."/>
            <person name="Akiyama Y."/>
        </authorList>
    </citation>
    <scope>NUCLEOTIDE SEQUENCE [GENOMIC DNA]</scope>
</reference>
<reference key="2">
    <citation type="journal article" date="2004" name="Proc. Natl. Acad. Sci. U.S.A.">
        <title>The human olfactory receptor gene family.</title>
        <authorList>
            <person name="Malnic B."/>
            <person name="Godfrey P.A."/>
            <person name="Buck L.B."/>
        </authorList>
    </citation>
    <scope>IDENTIFICATION</scope>
</reference>
<reference key="3">
    <citation type="journal article" date="2004" name="Proc. Natl. Acad. Sci. U.S.A.">
        <authorList>
            <person name="Malnic B."/>
            <person name="Godfrey P.A."/>
            <person name="Buck L.B."/>
        </authorList>
    </citation>
    <scope>ERRATUM OF PUBMED:14983052</scope>
</reference>
<accession>Q8NH08</accession>
<dbReference type="EMBL" id="AB065605">
    <property type="protein sequence ID" value="BAC05833.1"/>
    <property type="status" value="ALT_SEQ"/>
    <property type="molecule type" value="Genomic_DNA"/>
</dbReference>
<dbReference type="EMBL" id="BK004748">
    <property type="status" value="NOT_ANNOTATED_CDS"/>
    <property type="molecule type" value="Genomic_DNA"/>
</dbReference>
<dbReference type="SMR" id="Q8NH08"/>
<dbReference type="FunCoup" id="Q8NH08">
    <property type="interactions" value="659"/>
</dbReference>
<dbReference type="GlyCosmos" id="Q8NH08">
    <property type="glycosylation" value="1 site, No reported glycans"/>
</dbReference>
<dbReference type="GlyGen" id="Q8NH08">
    <property type="glycosylation" value="2 sites"/>
</dbReference>
<dbReference type="BioMuta" id="OR10AC1"/>
<dbReference type="DMDM" id="281185475"/>
<dbReference type="MassIVE" id="Q8NH08"/>
<dbReference type="PeptideAtlas" id="Q8NH08"/>
<dbReference type="ProteomicsDB" id="73644"/>
<dbReference type="AGR" id="HGNC:14758"/>
<dbReference type="GeneCards" id="OR10AC1"/>
<dbReference type="HGNC" id="HGNC:14758">
    <property type="gene designation" value="OR10AC1"/>
</dbReference>
<dbReference type="neXtProt" id="NX_Q8NH08"/>
<dbReference type="InParanoid" id="Q8NH08"/>
<dbReference type="OrthoDB" id="9450875at2759"/>
<dbReference type="PAN-GO" id="Q8NH08">
    <property type="GO annotations" value="1 GO annotation based on evolutionary models"/>
</dbReference>
<dbReference type="PhylomeDB" id="Q8NH08"/>
<dbReference type="PathwayCommons" id="Q8NH08"/>
<dbReference type="Reactome" id="R-HSA-9752946">
    <property type="pathway name" value="Expression and translocation of olfactory receptors"/>
</dbReference>
<dbReference type="Pharos" id="Q8NH08">
    <property type="development level" value="Tdark"/>
</dbReference>
<dbReference type="PRO" id="PR:Q8NH08"/>
<dbReference type="Proteomes" id="UP000005640">
    <property type="component" value="Unplaced"/>
</dbReference>
<dbReference type="RNAct" id="Q8NH08">
    <property type="molecule type" value="protein"/>
</dbReference>
<dbReference type="GO" id="GO:0005886">
    <property type="term" value="C:plasma membrane"/>
    <property type="evidence" value="ECO:0000318"/>
    <property type="project" value="GO_Central"/>
</dbReference>
<dbReference type="GO" id="GO:0004930">
    <property type="term" value="F:G protein-coupled receptor activity"/>
    <property type="evidence" value="ECO:0007669"/>
    <property type="project" value="UniProtKB-KW"/>
</dbReference>
<dbReference type="GO" id="GO:0004984">
    <property type="term" value="F:olfactory receptor activity"/>
    <property type="evidence" value="ECO:0000318"/>
    <property type="project" value="GO_Central"/>
</dbReference>
<dbReference type="GO" id="GO:0050911">
    <property type="term" value="P:detection of chemical stimulus involved in sensory perception of smell"/>
    <property type="evidence" value="ECO:0000318"/>
    <property type="project" value="GO_Central"/>
</dbReference>
<dbReference type="CDD" id="cd15225">
    <property type="entry name" value="7tmA_OR10A-like"/>
    <property type="match status" value="1"/>
</dbReference>
<dbReference type="FunFam" id="1.20.1070.10:FF:000010">
    <property type="entry name" value="Olfactory receptor"/>
    <property type="match status" value="1"/>
</dbReference>
<dbReference type="Gene3D" id="1.20.1070.10">
    <property type="entry name" value="Rhodopsin 7-helix transmembrane proteins"/>
    <property type="match status" value="1"/>
</dbReference>
<dbReference type="InterPro" id="IPR000276">
    <property type="entry name" value="GPCR_Rhodpsn"/>
</dbReference>
<dbReference type="InterPro" id="IPR017452">
    <property type="entry name" value="GPCR_Rhodpsn_7TM"/>
</dbReference>
<dbReference type="InterPro" id="IPR000725">
    <property type="entry name" value="Olfact_rcpt"/>
</dbReference>
<dbReference type="PANTHER" id="PTHR26453">
    <property type="entry name" value="OLFACTORY RECEPTOR"/>
    <property type="match status" value="1"/>
</dbReference>
<dbReference type="Pfam" id="PF13853">
    <property type="entry name" value="7tm_4"/>
    <property type="match status" value="1"/>
</dbReference>
<dbReference type="PRINTS" id="PR00237">
    <property type="entry name" value="GPCRRHODOPSN"/>
</dbReference>
<dbReference type="PRINTS" id="PR00245">
    <property type="entry name" value="OLFACTORYR"/>
</dbReference>
<dbReference type="SUPFAM" id="SSF81321">
    <property type="entry name" value="Family A G protein-coupled receptor-like"/>
    <property type="match status" value="1"/>
</dbReference>
<dbReference type="PROSITE" id="PS00237">
    <property type="entry name" value="G_PROTEIN_RECEP_F1_1"/>
    <property type="match status" value="1"/>
</dbReference>
<dbReference type="PROSITE" id="PS50262">
    <property type="entry name" value="G_PROTEIN_RECEP_F1_2"/>
    <property type="match status" value="1"/>
</dbReference>
<sequence>MDSPSNATVPCGFLLQGFSEFPHLRPVLFLLLLGVHLATLGGNLLILVAVASMPSRQPMLLFLCQLSAIELCYTLVVVPRSLVDLSTPGHRRGSPISFLSCAFQMQMFVALGGAECFLLAAMAYDRYVAICHPLRYAAVVTPGLCARLALACCLRGLAVSVGLTVAIFHLPFCGSRLLLHFFCDITALLHLACTRSYADELPLLGACLVLLLLPSVLILASYGAIAAALRRLRCPKGRGKAASTCALHLAVTFLHYGCATFMYVRPRASYSPRLDRTLALVYTNVTPLLCPLIYSLRNREITAALSRVLGRRRPGQAPGGDLREL</sequence>
<evidence type="ECO:0000250" key="1"/>
<evidence type="ECO:0000255" key="2"/>
<evidence type="ECO:0000255" key="3">
    <source>
        <dbReference type="PROSITE-ProRule" id="PRU00521"/>
    </source>
</evidence>
<evidence type="ECO:0000305" key="4"/>
<gene>
    <name type="primary">OR10AC1</name>
    <name type="synonym">OR10AC1P</name>
</gene>
<comment type="function">
    <text evidence="1">Odorant receptor.</text>
</comment>
<comment type="subcellular location">
    <subcellularLocation>
        <location evidence="4">Cell membrane</location>
        <topology evidence="4">Multi-pass membrane protein</topology>
    </subcellularLocation>
</comment>
<comment type="polymorphism">
    <text evidence="4">A stop codon due to a single nucleotide insertion in the gene coding for this protein at position Ile-90 is responsible for functional diversity thus producing a pseudogene.</text>
</comment>
<comment type="similarity">
    <text evidence="3">Belongs to the G-protein coupled receptor 1 family.</text>
</comment>
<comment type="sequence caution" evidence="4">
    <conflict type="erroneous gene model prediction">
        <sequence resource="EMBL-CDS" id="BAC05833"/>
    </conflict>
</comment>
<comment type="online information" name="Human Olfactory Receptor Data Exploratorium (HORDE)">
    <link uri="http://genome.weizmann.ac.il/horde/card/index/symbol:OR10AC1P"/>
</comment>
<protein>
    <recommendedName>
        <fullName>Olfactory receptor 10AC1</fullName>
    </recommendedName>
    <alternativeName>
        <fullName>Olfactory receptor OR7-5</fullName>
    </alternativeName>
</protein>
<feature type="chain" id="PRO_0000349381" description="Olfactory receptor 10AC1">
    <location>
        <begin position="1"/>
        <end position="325"/>
    </location>
</feature>
<feature type="topological domain" description="Extracellular" evidence="2">
    <location>
        <begin position="1"/>
        <end position="26"/>
    </location>
</feature>
<feature type="transmembrane region" description="Helical; Name=1" evidence="2">
    <location>
        <begin position="27"/>
        <end position="47"/>
    </location>
</feature>
<feature type="topological domain" description="Cytoplasmic" evidence="2">
    <location>
        <begin position="48"/>
        <end position="57"/>
    </location>
</feature>
<feature type="transmembrane region" description="Helical; Name=2" evidence="2">
    <location>
        <begin position="58"/>
        <end position="78"/>
    </location>
</feature>
<feature type="topological domain" description="Extracellular" evidence="2">
    <location>
        <begin position="79"/>
        <end position="101"/>
    </location>
</feature>
<feature type="transmembrane region" description="Helical; Name=3" evidence="2">
    <location>
        <begin position="102"/>
        <end position="122"/>
    </location>
</feature>
<feature type="topological domain" description="Cytoplasmic" evidence="2">
    <location>
        <begin position="123"/>
        <end position="147"/>
    </location>
</feature>
<feature type="transmembrane region" description="Helical; Name=4" evidence="2">
    <location>
        <begin position="148"/>
        <end position="168"/>
    </location>
</feature>
<feature type="topological domain" description="Extracellular" evidence="2">
    <location>
        <begin position="169"/>
        <end position="171"/>
    </location>
</feature>
<feature type="transmembrane region" description="Helical; Name=5" evidence="2">
    <location>
        <begin position="172"/>
        <end position="192"/>
    </location>
</feature>
<feature type="topological domain" description="Cytoplasmic" evidence="2">
    <location>
        <begin position="193"/>
        <end position="200"/>
    </location>
</feature>
<feature type="transmembrane region" description="Helical; Name=6" evidence="2">
    <location>
        <begin position="201"/>
        <end position="221"/>
    </location>
</feature>
<feature type="topological domain" description="Extracellular" evidence="2">
    <location>
        <begin position="222"/>
        <end position="243"/>
    </location>
</feature>
<feature type="transmembrane region" description="Helical; Name=7" evidence="2">
    <location>
        <begin position="244"/>
        <end position="264"/>
    </location>
</feature>
<feature type="topological domain" description="Cytoplasmic" evidence="2">
    <location>
        <begin position="265"/>
        <end position="325"/>
    </location>
</feature>
<feature type="glycosylation site" description="N-linked (GlcNAc...) asparagine" evidence="2">
    <location>
        <position position="6"/>
    </location>
</feature>
<name>O10AC_HUMAN</name>
<keyword id="KW-1003">Cell membrane</keyword>
<keyword id="KW-0297">G-protein coupled receptor</keyword>
<keyword id="KW-0325">Glycoprotein</keyword>
<keyword id="KW-0472">Membrane</keyword>
<keyword id="KW-0552">Olfaction</keyword>
<keyword id="KW-0675">Receptor</keyword>
<keyword id="KW-1185">Reference proteome</keyword>
<keyword id="KW-0716">Sensory transduction</keyword>
<keyword id="KW-0807">Transducer</keyword>
<keyword id="KW-0812">Transmembrane</keyword>
<keyword id="KW-1133">Transmembrane helix</keyword>
<proteinExistence type="inferred from homology"/>
<organism>
    <name type="scientific">Homo sapiens</name>
    <name type="common">Human</name>
    <dbReference type="NCBI Taxonomy" id="9606"/>
    <lineage>
        <taxon>Eukaryota</taxon>
        <taxon>Metazoa</taxon>
        <taxon>Chordata</taxon>
        <taxon>Craniata</taxon>
        <taxon>Vertebrata</taxon>
        <taxon>Euteleostomi</taxon>
        <taxon>Mammalia</taxon>
        <taxon>Eutheria</taxon>
        <taxon>Euarchontoglires</taxon>
        <taxon>Primates</taxon>
        <taxon>Haplorrhini</taxon>
        <taxon>Catarrhini</taxon>
        <taxon>Hominidae</taxon>
        <taxon>Homo</taxon>
    </lineage>
</organism>